<reference key="1">
    <citation type="journal article" date="2006" name="Nat. Genet.">
        <title>The multidrug-resistant human pathogen Clostridium difficile has a highly mobile, mosaic genome.</title>
        <authorList>
            <person name="Sebaihia M."/>
            <person name="Wren B.W."/>
            <person name="Mullany P."/>
            <person name="Fairweather N.F."/>
            <person name="Minton N."/>
            <person name="Stabler R."/>
            <person name="Thomson N.R."/>
            <person name="Roberts A.P."/>
            <person name="Cerdeno-Tarraga A.M."/>
            <person name="Wang H."/>
            <person name="Holden M.T.G."/>
            <person name="Wright A."/>
            <person name="Churcher C."/>
            <person name="Quail M.A."/>
            <person name="Baker S."/>
            <person name="Bason N."/>
            <person name="Brooks K."/>
            <person name="Chillingworth T."/>
            <person name="Cronin A."/>
            <person name="Davis P."/>
            <person name="Dowd L."/>
            <person name="Fraser A."/>
            <person name="Feltwell T."/>
            <person name="Hance Z."/>
            <person name="Holroyd S."/>
            <person name="Jagels K."/>
            <person name="Moule S."/>
            <person name="Mungall K."/>
            <person name="Price C."/>
            <person name="Rabbinowitsch E."/>
            <person name="Sharp S."/>
            <person name="Simmonds M."/>
            <person name="Stevens K."/>
            <person name="Unwin L."/>
            <person name="Whithead S."/>
            <person name="Dupuy B."/>
            <person name="Dougan G."/>
            <person name="Barrell B."/>
            <person name="Parkhill J."/>
        </authorList>
    </citation>
    <scope>NUCLEOTIDE SEQUENCE [LARGE SCALE GENOMIC DNA]</scope>
    <source>
        <strain>630</strain>
    </source>
</reference>
<proteinExistence type="inferred from homology"/>
<dbReference type="EC" id="5.3.1.16" evidence="1"/>
<dbReference type="EMBL" id="AM180355">
    <property type="protein sequence ID" value="CAJ68417.1"/>
    <property type="molecule type" value="Genomic_DNA"/>
</dbReference>
<dbReference type="RefSeq" id="WP_003436675.1">
    <property type="nucleotide sequence ID" value="NZ_JAUPES010000019.1"/>
</dbReference>
<dbReference type="RefSeq" id="YP_001088053.1">
    <property type="nucleotide sequence ID" value="NC_009089.1"/>
</dbReference>
<dbReference type="SMR" id="Q18C71"/>
<dbReference type="STRING" id="272563.CD630_15520"/>
<dbReference type="EnsemblBacteria" id="CAJ68417">
    <property type="protein sequence ID" value="CAJ68417"/>
    <property type="gene ID" value="CD630_15520"/>
</dbReference>
<dbReference type="GeneID" id="66353962"/>
<dbReference type="KEGG" id="cdf:CD630_15520"/>
<dbReference type="KEGG" id="pdc:CDIF630_01721"/>
<dbReference type="PATRIC" id="fig|272563.120.peg.1626"/>
<dbReference type="eggNOG" id="COG0106">
    <property type="taxonomic scope" value="Bacteria"/>
</dbReference>
<dbReference type="OrthoDB" id="9807749at2"/>
<dbReference type="PhylomeDB" id="Q18C71"/>
<dbReference type="BioCyc" id="PDIF272563:G12WB-1691-MONOMER"/>
<dbReference type="UniPathway" id="UPA00031">
    <property type="reaction ID" value="UER00009"/>
</dbReference>
<dbReference type="Proteomes" id="UP000001978">
    <property type="component" value="Chromosome"/>
</dbReference>
<dbReference type="GO" id="GO:0005737">
    <property type="term" value="C:cytoplasm"/>
    <property type="evidence" value="ECO:0007669"/>
    <property type="project" value="UniProtKB-SubCell"/>
</dbReference>
<dbReference type="GO" id="GO:0003949">
    <property type="term" value="F:1-(5-phosphoribosyl)-5-[(5-phosphoribosylamino)methylideneamino]imidazole-4-carboxamide isomerase activity"/>
    <property type="evidence" value="ECO:0007669"/>
    <property type="project" value="UniProtKB-UniRule"/>
</dbReference>
<dbReference type="GO" id="GO:0000105">
    <property type="term" value="P:L-histidine biosynthetic process"/>
    <property type="evidence" value="ECO:0007669"/>
    <property type="project" value="UniProtKB-UniRule"/>
</dbReference>
<dbReference type="GO" id="GO:0000162">
    <property type="term" value="P:L-tryptophan biosynthetic process"/>
    <property type="evidence" value="ECO:0007669"/>
    <property type="project" value="TreeGrafter"/>
</dbReference>
<dbReference type="CDD" id="cd04732">
    <property type="entry name" value="HisA"/>
    <property type="match status" value="1"/>
</dbReference>
<dbReference type="FunFam" id="3.20.20.70:FF:000009">
    <property type="entry name" value="1-(5-phosphoribosyl)-5-[(5-phosphoribosylamino)methylideneamino] imidazole-4-carboxamide isomerase"/>
    <property type="match status" value="1"/>
</dbReference>
<dbReference type="Gene3D" id="3.20.20.70">
    <property type="entry name" value="Aldolase class I"/>
    <property type="match status" value="1"/>
</dbReference>
<dbReference type="HAMAP" id="MF_01014">
    <property type="entry name" value="HisA"/>
    <property type="match status" value="1"/>
</dbReference>
<dbReference type="InterPro" id="IPR013785">
    <property type="entry name" value="Aldolase_TIM"/>
</dbReference>
<dbReference type="InterPro" id="IPR006062">
    <property type="entry name" value="His_biosynth"/>
</dbReference>
<dbReference type="InterPro" id="IPR006063">
    <property type="entry name" value="HisA_bact_arch"/>
</dbReference>
<dbReference type="InterPro" id="IPR044524">
    <property type="entry name" value="Isoase_HisA-like"/>
</dbReference>
<dbReference type="InterPro" id="IPR023016">
    <property type="entry name" value="Isoase_HisA-like_bact"/>
</dbReference>
<dbReference type="InterPro" id="IPR011060">
    <property type="entry name" value="RibuloseP-bd_barrel"/>
</dbReference>
<dbReference type="NCBIfam" id="TIGR00007">
    <property type="entry name" value="1-(5-phosphoribosyl)-5-[(5-phosphoribosylamino)methylideneamino]imidazole-4-carboxamide isomerase"/>
    <property type="match status" value="1"/>
</dbReference>
<dbReference type="NCBIfam" id="NF010112">
    <property type="entry name" value="PRK13585.1"/>
    <property type="match status" value="1"/>
</dbReference>
<dbReference type="PANTHER" id="PTHR43090">
    <property type="entry name" value="1-(5-PHOSPHORIBOSYL)-5-[(5-PHOSPHORIBOSYLAMINO)METHYLIDENEAMINO] IMIDAZOLE-4-CARBOXAMIDE ISOMERASE"/>
    <property type="match status" value="1"/>
</dbReference>
<dbReference type="PANTHER" id="PTHR43090:SF2">
    <property type="entry name" value="1-(5-PHOSPHORIBOSYL)-5-[(5-PHOSPHORIBOSYLAMINO)METHYLIDENEAMINO] IMIDAZOLE-4-CARBOXAMIDE ISOMERASE"/>
    <property type="match status" value="1"/>
</dbReference>
<dbReference type="Pfam" id="PF00977">
    <property type="entry name" value="His_biosynth"/>
    <property type="match status" value="1"/>
</dbReference>
<dbReference type="SUPFAM" id="SSF51366">
    <property type="entry name" value="Ribulose-phoshate binding barrel"/>
    <property type="match status" value="1"/>
</dbReference>
<protein>
    <recommendedName>
        <fullName evidence="1">1-(5-phosphoribosyl)-5-[(5-phosphoribosylamino)methylideneamino] imidazole-4-carboxamide isomerase</fullName>
        <ecNumber evidence="1">5.3.1.16</ecNumber>
    </recommendedName>
    <alternativeName>
        <fullName evidence="1">Phosphoribosylformimino-5-aminoimidazole carboxamide ribotide isomerase</fullName>
    </alternativeName>
</protein>
<keyword id="KW-0028">Amino-acid biosynthesis</keyword>
<keyword id="KW-0963">Cytoplasm</keyword>
<keyword id="KW-0368">Histidine biosynthesis</keyword>
<keyword id="KW-0413">Isomerase</keyword>
<keyword id="KW-1185">Reference proteome</keyword>
<gene>
    <name evidence="1" type="primary">hisA</name>
    <name type="ordered locus">CD630_15520</name>
</gene>
<comment type="catalytic activity">
    <reaction evidence="1">
        <text>1-(5-phospho-beta-D-ribosyl)-5-[(5-phospho-beta-D-ribosylamino)methylideneamino]imidazole-4-carboxamide = 5-[(5-phospho-1-deoxy-D-ribulos-1-ylimino)methylamino]-1-(5-phospho-beta-D-ribosyl)imidazole-4-carboxamide</text>
        <dbReference type="Rhea" id="RHEA:15469"/>
        <dbReference type="ChEBI" id="CHEBI:58435"/>
        <dbReference type="ChEBI" id="CHEBI:58525"/>
        <dbReference type="EC" id="5.3.1.16"/>
    </reaction>
</comment>
<comment type="pathway">
    <text evidence="1">Amino-acid biosynthesis; L-histidine biosynthesis; L-histidine from 5-phospho-alpha-D-ribose 1-diphosphate: step 4/9.</text>
</comment>
<comment type="subcellular location">
    <subcellularLocation>
        <location evidence="1">Cytoplasm</location>
    </subcellularLocation>
</comment>
<comment type="similarity">
    <text evidence="1">Belongs to the HisA/HisF family.</text>
</comment>
<organism>
    <name type="scientific">Clostridioides difficile (strain 630)</name>
    <name type="common">Peptoclostridium difficile</name>
    <dbReference type="NCBI Taxonomy" id="272563"/>
    <lineage>
        <taxon>Bacteria</taxon>
        <taxon>Bacillati</taxon>
        <taxon>Bacillota</taxon>
        <taxon>Clostridia</taxon>
        <taxon>Peptostreptococcales</taxon>
        <taxon>Peptostreptococcaceae</taxon>
        <taxon>Clostridioides</taxon>
    </lineage>
</organism>
<feature type="chain" id="PRO_0000290464" description="1-(5-phosphoribosyl)-5-[(5-phosphoribosylamino)methylideneamino] imidazole-4-carboxamide isomerase">
    <location>
        <begin position="1"/>
        <end position="240"/>
    </location>
</feature>
<feature type="active site" description="Proton acceptor" evidence="1">
    <location>
        <position position="8"/>
    </location>
</feature>
<feature type="active site" description="Proton donor" evidence="1">
    <location>
        <position position="129"/>
    </location>
</feature>
<name>HIS4_CLOD6</name>
<evidence type="ECO:0000255" key="1">
    <source>
        <dbReference type="HAMAP-Rule" id="MF_01014"/>
    </source>
</evidence>
<accession>Q18C71</accession>
<sequence length="240" mass="26624">MIIFPAIDIKDNKCVRLTQGEFDKVNVYYDNPLEVAYKWKNEGAEYIHIVDLNGARSEFGVNTKIIEDIANNIDIPIQVGGGVRDKEKVKSLINAGVTRVILGSIAIENLNLVEELVNEYKEKIVVSIDAKDGKVAVRGWEVVSNVDSLTLCKQLEKIGVQTIVYTDISKDGMLQGPNFDIYERIAKETSLNVIASGGVTSIEDVKRLKAMNLYGAIIGKALYDKKIDFKEAQQLCLLGE</sequence>